<accession>A0A1P7Y0A8</accession>
<protein>
    <recommendedName>
        <fullName evidence="7">Squalene synthase 12</fullName>
        <shortName evidence="9">PgSS12</shortName>
        <shortName evidence="9">SQS 12</shortName>
        <ecNumber evidence="3">2.5.1.21</ecNumber>
    </recommendedName>
    <alternativeName>
        <fullName evidence="9">FPP:FPP farnesyltransferase SS12</fullName>
    </alternativeName>
    <alternativeName>
        <fullName evidence="9">Farnesyl-diphosphate farnesyltransferase SS12</fullName>
    </alternativeName>
</protein>
<feature type="chain" id="PRO_0000446958" description="Squalene synthase 12">
    <location>
        <begin position="1"/>
        <end position="415"/>
    </location>
</feature>
<feature type="transmembrane region" description="Helical" evidence="4">
    <location>
        <begin position="281"/>
        <end position="301"/>
    </location>
</feature>
<feature type="transmembrane region" description="Helical" evidence="4">
    <location>
        <begin position="391"/>
        <end position="411"/>
    </location>
</feature>
<organism>
    <name type="scientific">Panax ginseng</name>
    <name type="common">Korean ginseng</name>
    <dbReference type="NCBI Taxonomy" id="4054"/>
    <lineage>
        <taxon>Eukaryota</taxon>
        <taxon>Viridiplantae</taxon>
        <taxon>Streptophyta</taxon>
        <taxon>Embryophyta</taxon>
        <taxon>Tracheophyta</taxon>
        <taxon>Spermatophyta</taxon>
        <taxon>Magnoliopsida</taxon>
        <taxon>eudicotyledons</taxon>
        <taxon>Gunneridae</taxon>
        <taxon>Pentapetalae</taxon>
        <taxon>asterids</taxon>
        <taxon>campanulids</taxon>
        <taxon>Apiales</taxon>
        <taxon>Araliaceae</taxon>
        <taxon>Panax</taxon>
    </lineage>
</organism>
<keyword id="KW-0256">Endoplasmic reticulum</keyword>
<keyword id="KW-0414">Isoprene biosynthesis</keyword>
<keyword id="KW-0460">Magnesium</keyword>
<keyword id="KW-0472">Membrane</keyword>
<keyword id="KW-0511">Multifunctional enzyme</keyword>
<keyword id="KW-0521">NADP</keyword>
<keyword id="KW-0808">Transferase</keyword>
<keyword id="KW-0812">Transmembrane</keyword>
<keyword id="KW-1133">Transmembrane helix</keyword>
<proteinExistence type="evidence at transcript level"/>
<name>SQS12_PANGI</name>
<evidence type="ECO:0000250" key="1">
    <source>
        <dbReference type="UniProtKB" id="D2K762"/>
    </source>
</evidence>
<evidence type="ECO:0000250" key="2">
    <source>
        <dbReference type="UniProtKB" id="O48666"/>
    </source>
</evidence>
<evidence type="ECO:0000250" key="3">
    <source>
        <dbReference type="UniProtKB" id="P53799"/>
    </source>
</evidence>
<evidence type="ECO:0000255" key="4"/>
<evidence type="ECO:0000269" key="5">
    <source>
    </source>
</evidence>
<evidence type="ECO:0000269" key="6">
    <source>
    </source>
</evidence>
<evidence type="ECO:0000303" key="7">
    <source>
    </source>
</evidence>
<evidence type="ECO:0000303" key="8">
    <source>
    </source>
</evidence>
<evidence type="ECO:0000305" key="9"/>
<sequence length="415" mass="46907">MGSLGAILKHPDDFYPLLKLKIAARHAEKQIPSEPHWAFCYSMLHKVSRSFGLVIQQLGPQLRDAVCIFYLVLRALDTVEDDTSISTEVKVPIVMAFHCHIYDNDWHFSCGTKEYKVLMDEFHHVSNAFLDLGSSYKEAIEDITMRMGAGMAKFICKEVETIDDYDEYCHYVAGLVGLGLSKLFHASGAEDLATDSLSNSMGLFLQKTNIIRDYLEDINEIPKSRMFWPRQIWSKYVDKLEDLKYEENSAKAVQCLNDMVTDALVHAEDCLKYMSDLRGPAIFRFCAIPQIMAIGTLALCFNNTQVFRGVVKMRRGLTAKVIDQTKTMSDVYGAFFDFSCLLKSKVDNNDPNATKTLSRLEAIQKTCKESGTLSKRKSYIIESESGHNSALIAIIFIILAILYAYLSSNLLPNKQ</sequence>
<dbReference type="EC" id="2.5.1.21" evidence="3"/>
<dbReference type="EMBL" id="KP689322">
    <property type="protein sequence ID" value="AJK30634.1"/>
    <property type="molecule type" value="mRNA"/>
</dbReference>
<dbReference type="SMR" id="A0A1P7Y0A8"/>
<dbReference type="UniPathway" id="UPA00767">
    <property type="reaction ID" value="UER00751"/>
</dbReference>
<dbReference type="GO" id="GO:0005789">
    <property type="term" value="C:endoplasmic reticulum membrane"/>
    <property type="evidence" value="ECO:0007669"/>
    <property type="project" value="UniProtKB-SubCell"/>
</dbReference>
<dbReference type="GO" id="GO:0051996">
    <property type="term" value="F:squalene synthase [NAD(P)H] activity"/>
    <property type="evidence" value="ECO:0007669"/>
    <property type="project" value="UniProtKB-EC"/>
</dbReference>
<dbReference type="GO" id="GO:0045338">
    <property type="term" value="P:farnesyl diphosphate metabolic process"/>
    <property type="evidence" value="ECO:0007669"/>
    <property type="project" value="InterPro"/>
</dbReference>
<dbReference type="GO" id="GO:0008299">
    <property type="term" value="P:isoprenoid biosynthetic process"/>
    <property type="evidence" value="ECO:0007669"/>
    <property type="project" value="UniProtKB-KW"/>
</dbReference>
<dbReference type="GO" id="GO:0009753">
    <property type="term" value="P:response to jasmonic acid"/>
    <property type="evidence" value="ECO:0000270"/>
    <property type="project" value="UniProtKB"/>
</dbReference>
<dbReference type="GO" id="GO:0002238">
    <property type="term" value="P:response to molecule of fungal origin"/>
    <property type="evidence" value="ECO:0000270"/>
    <property type="project" value="UniProtKB"/>
</dbReference>
<dbReference type="CDD" id="cd00683">
    <property type="entry name" value="Trans_IPPS_HH"/>
    <property type="match status" value="1"/>
</dbReference>
<dbReference type="FunFam" id="1.10.600.10:FF:000012">
    <property type="entry name" value="Squalene synthase 1"/>
    <property type="match status" value="1"/>
</dbReference>
<dbReference type="Gene3D" id="1.10.600.10">
    <property type="entry name" value="Farnesyl Diphosphate Synthase"/>
    <property type="match status" value="1"/>
</dbReference>
<dbReference type="InterPro" id="IPR008949">
    <property type="entry name" value="Isoprenoid_synthase_dom_sf"/>
</dbReference>
<dbReference type="InterPro" id="IPR002060">
    <property type="entry name" value="Squ/phyt_synthse"/>
</dbReference>
<dbReference type="InterPro" id="IPR006449">
    <property type="entry name" value="Squal_synth-like"/>
</dbReference>
<dbReference type="InterPro" id="IPR019845">
    <property type="entry name" value="Squalene/phytoene_synthase_CS"/>
</dbReference>
<dbReference type="InterPro" id="IPR044844">
    <property type="entry name" value="Trans_IPPS_euk-type"/>
</dbReference>
<dbReference type="InterPro" id="IPR033904">
    <property type="entry name" value="Trans_IPPS_HH"/>
</dbReference>
<dbReference type="NCBIfam" id="TIGR01559">
    <property type="entry name" value="squal_synth"/>
    <property type="match status" value="1"/>
</dbReference>
<dbReference type="PANTHER" id="PTHR11626">
    <property type="entry name" value="FARNESYL-DIPHOSPHATE FARNESYLTRANSFERASE"/>
    <property type="match status" value="1"/>
</dbReference>
<dbReference type="PANTHER" id="PTHR11626:SF2">
    <property type="entry name" value="SQUALENE SYNTHASE"/>
    <property type="match status" value="1"/>
</dbReference>
<dbReference type="Pfam" id="PF00494">
    <property type="entry name" value="SQS_PSY"/>
    <property type="match status" value="1"/>
</dbReference>
<dbReference type="SFLD" id="SFLDS00005">
    <property type="entry name" value="Isoprenoid_Synthase_Type_I"/>
    <property type="match status" value="1"/>
</dbReference>
<dbReference type="SFLD" id="SFLDG01018">
    <property type="entry name" value="Squalene/Phytoene_Synthase_Lik"/>
    <property type="match status" value="1"/>
</dbReference>
<dbReference type="SUPFAM" id="SSF48576">
    <property type="entry name" value="Terpenoid synthases"/>
    <property type="match status" value="1"/>
</dbReference>
<dbReference type="PROSITE" id="PS01044">
    <property type="entry name" value="SQUALEN_PHYTOEN_SYN_1"/>
    <property type="match status" value="1"/>
</dbReference>
<dbReference type="PROSITE" id="PS01045">
    <property type="entry name" value="SQUALEN_PHYTOEN_SYN_2"/>
    <property type="match status" value="1"/>
</dbReference>
<gene>
    <name evidence="7" type="primary">SS12</name>
</gene>
<reference key="1">
    <citation type="journal article" date="2015" name="Int. J. Mol. Sci.">
        <title>Transcriptome analysis of methyl jasmonate-elicited Panax ginseng adventitious roots to discover putative ginsenoside biosynthesis and transport genes.</title>
        <authorList>
            <person name="Cao H."/>
            <person name="Nuruzzaman M."/>
            <person name="Xiu H."/>
            <person name="Huang J."/>
            <person name="Wu K."/>
            <person name="Chen X."/>
            <person name="Li J."/>
            <person name="Wang L."/>
            <person name="Jeong J.-H."/>
            <person name="Park S.-J."/>
            <person name="Yang F."/>
            <person name="Luo J."/>
            <person name="Luo Z."/>
        </authorList>
    </citation>
    <scope>NUCLEOTIDE SEQUENCE [LARGE SCALE MRNA]</scope>
    <scope>INDUCTION BY METHYL JASMONATE</scope>
    <source>
        <strain>cv. Damaya</strain>
    </source>
</reference>
<reference key="2">
    <citation type="journal article" date="2016" name="J. Biotechnol.">
        <title>Fungal elicitors enhance ginsenosides biosynthesis, expression of functional genes as well as signal molecules accumulation in adventitious roots of Panax ginseng C. A. Mey.</title>
        <authorList>
            <person name="Li J."/>
            <person name="Liu S."/>
            <person name="Wang J."/>
            <person name="Li J."/>
            <person name="Liu D."/>
            <person name="Li J."/>
            <person name="Gao W."/>
        </authorList>
    </citation>
    <scope>FUNCTION</scope>
    <scope>INDUCTION BY ASPERGILLUS NIGER</scope>
</reference>
<reference key="3">
    <citation type="journal article" date="2018" name="Biotechnol. Appl. Biochem.">
        <title>Advances in ginsenoside biosynthesis and metabolic regulation.</title>
        <authorList>
            <person name="Lu J."/>
            <person name="Li J."/>
            <person name="Wang S."/>
            <person name="Yao L."/>
            <person name="Liang W."/>
            <person name="Wang J."/>
            <person name="Gao W."/>
        </authorList>
    </citation>
    <scope>REVIEW</scope>
</reference>
<reference key="4">
    <citation type="journal article" date="2018" name="Molecules">
        <title>Progress on the studies of the key enzymes of ginsenoside biosynthesis.</title>
        <authorList>
            <person name="Yang J.-L."/>
            <person name="Hu Z.-F."/>
            <person name="Zhang T.-T."/>
            <person name="Gu A.-D."/>
            <person name="Gong T."/>
            <person name="Zhu P."/>
        </authorList>
    </citation>
    <scope>REVIEW</scope>
</reference>
<comment type="function">
    <text evidence="2 6 8">Component of the triterpene saponins (e.g. ginsenosides or panaxosides) and phytosterols biosynthetic pathways (PubMed:27746309, PubMed:29378087). Catalyzes the biosynthesis of squalene (By similarity).</text>
</comment>
<comment type="catalytic activity">
    <reaction evidence="3">
        <text>2 (2E,6E)-farnesyl diphosphate + NADH + H(+) = squalene + 2 diphosphate + NAD(+)</text>
        <dbReference type="Rhea" id="RHEA:32299"/>
        <dbReference type="ChEBI" id="CHEBI:15378"/>
        <dbReference type="ChEBI" id="CHEBI:15440"/>
        <dbReference type="ChEBI" id="CHEBI:33019"/>
        <dbReference type="ChEBI" id="CHEBI:57540"/>
        <dbReference type="ChEBI" id="CHEBI:57945"/>
        <dbReference type="ChEBI" id="CHEBI:175763"/>
        <dbReference type="EC" id="2.5.1.21"/>
    </reaction>
    <physiologicalReaction direction="left-to-right" evidence="1">
        <dbReference type="Rhea" id="RHEA:32300"/>
    </physiologicalReaction>
</comment>
<comment type="catalytic activity">
    <reaction evidence="3">
        <text>2 (2E,6E)-farnesyl diphosphate + NADPH + H(+) = squalene + 2 diphosphate + NADP(+)</text>
        <dbReference type="Rhea" id="RHEA:32295"/>
        <dbReference type="ChEBI" id="CHEBI:15378"/>
        <dbReference type="ChEBI" id="CHEBI:15440"/>
        <dbReference type="ChEBI" id="CHEBI:33019"/>
        <dbReference type="ChEBI" id="CHEBI:57783"/>
        <dbReference type="ChEBI" id="CHEBI:58349"/>
        <dbReference type="ChEBI" id="CHEBI:175763"/>
        <dbReference type="EC" id="2.5.1.21"/>
    </reaction>
    <physiologicalReaction direction="left-to-right" evidence="1">
        <dbReference type="Rhea" id="RHEA:32296"/>
    </physiologicalReaction>
</comment>
<comment type="cofactor">
    <cofactor evidence="3">
        <name>Mg(2+)</name>
        <dbReference type="ChEBI" id="CHEBI:18420"/>
    </cofactor>
    <cofactor evidence="3">
        <name>Mn(2+)</name>
        <dbReference type="ChEBI" id="CHEBI:29035"/>
    </cofactor>
</comment>
<comment type="pathway">
    <text evidence="3">Terpene metabolism; lanosterol biosynthesis; lanosterol from farnesyl diphosphate: step 1/3.</text>
</comment>
<comment type="subcellular location">
    <subcellularLocation>
        <location evidence="3">Endoplasmic reticulum membrane</location>
        <topology evidence="4">Multi-pass membrane protein</topology>
    </subcellularLocation>
</comment>
<comment type="induction">
    <text evidence="5 6">Induced methyl jasmonate (MeJA) in adventitious roots (PubMed:25642758). Induced by A.niger mycelium-derived elicitor, thus improving ginsenosides production in adventitious roots culture (PubMed:27746309).</text>
</comment>
<comment type="similarity">
    <text evidence="9">Belongs to the phytoene/squalene synthase family.</text>
</comment>